<feature type="chain" id="PRO_0000372351" description="Uncharacterized protein C27B12.07">
    <location>
        <begin position="1"/>
        <end position="290"/>
    </location>
</feature>
<feature type="transmembrane region" description="Helical" evidence="1">
    <location>
        <begin position="236"/>
        <end position="256"/>
    </location>
</feature>
<feature type="coiled-coil region" evidence="1">
    <location>
        <begin position="161"/>
        <end position="216"/>
    </location>
</feature>
<proteinExistence type="predicted"/>
<name>YBC7_SCHPO</name>
<dbReference type="EMBL" id="AB004539">
    <property type="protein sequence ID" value="BAA21453.1"/>
    <property type="status" value="ALT_FRAME"/>
    <property type="molecule type" value="Genomic_DNA"/>
</dbReference>
<dbReference type="EMBL" id="CU329671">
    <property type="protein sequence ID" value="CAA16902.1"/>
    <property type="molecule type" value="Genomic_DNA"/>
</dbReference>
<dbReference type="PIR" id="T40031">
    <property type="entry name" value="T40031"/>
</dbReference>
<dbReference type="RefSeq" id="NP_595539.1">
    <property type="nucleotide sequence ID" value="NM_001021450.2"/>
</dbReference>
<dbReference type="SMR" id="O42997"/>
<dbReference type="FunCoup" id="O42997">
    <property type="interactions" value="212"/>
</dbReference>
<dbReference type="STRING" id="284812.O42997"/>
<dbReference type="PaxDb" id="4896-SPBC27B12.07.1"/>
<dbReference type="EnsemblFungi" id="SPBC27B12.07.1">
    <property type="protein sequence ID" value="SPBC27B12.07.1:pep"/>
    <property type="gene ID" value="SPBC27B12.07"/>
</dbReference>
<dbReference type="KEGG" id="spo:2540478"/>
<dbReference type="PomBase" id="SPBC27B12.07"/>
<dbReference type="VEuPathDB" id="FungiDB:SPBC27B12.07"/>
<dbReference type="eggNOG" id="ENOG502S831">
    <property type="taxonomic scope" value="Eukaryota"/>
</dbReference>
<dbReference type="HOGENOM" id="CLU_960285_0_0_1"/>
<dbReference type="InParanoid" id="O42997"/>
<dbReference type="OMA" id="RSEKINM"/>
<dbReference type="PhylomeDB" id="O42997"/>
<dbReference type="PRO" id="PR:O42997"/>
<dbReference type="Proteomes" id="UP000002485">
    <property type="component" value="Chromosome II"/>
</dbReference>
<dbReference type="GO" id="GO:0005743">
    <property type="term" value="C:mitochondrial inner membrane"/>
    <property type="evidence" value="ECO:0000266"/>
    <property type="project" value="PomBase"/>
</dbReference>
<dbReference type="GO" id="GO:0005739">
    <property type="term" value="C:mitochondrion"/>
    <property type="evidence" value="ECO:0007005"/>
    <property type="project" value="PomBase"/>
</dbReference>
<dbReference type="GO" id="GO:2000214">
    <property type="term" value="P:regulation of proline metabolic process"/>
    <property type="evidence" value="ECO:0000266"/>
    <property type="project" value="PomBase"/>
</dbReference>
<dbReference type="Gene3D" id="1.20.5.340">
    <property type="match status" value="1"/>
</dbReference>
<dbReference type="InterPro" id="IPR024461">
    <property type="entry name" value="CCDC90-like"/>
</dbReference>
<dbReference type="PANTHER" id="PTHR14360:SF12">
    <property type="entry name" value="MOZ PROTEIN REPRESENTS A CHROMATIN-ASSOCIATED ACETYLTRANSFERASE"/>
    <property type="match status" value="1"/>
</dbReference>
<dbReference type="PANTHER" id="PTHR14360">
    <property type="entry name" value="PROTEIN FMP32, MITOCHONDRIAL"/>
    <property type="match status" value="1"/>
</dbReference>
<dbReference type="Pfam" id="PF07798">
    <property type="entry name" value="CCDC90-like"/>
    <property type="match status" value="1"/>
</dbReference>
<reference key="1">
    <citation type="journal article" date="2000" name="Yeast">
        <title>A 38 kb segment containing the cdc2 gene from the left arm of fission yeast chromosome II: sequence analysis and characterization of the genomic DNA and cDNAs encoded on the segment.</title>
        <authorList>
            <person name="Machida M."/>
            <person name="Yamazaki S."/>
            <person name="Kunihiro S."/>
            <person name="Tanaka T."/>
            <person name="Kushida N."/>
            <person name="Jinno K."/>
            <person name="Haikawa Y."/>
            <person name="Yamazaki J."/>
            <person name="Yamamoto S."/>
            <person name="Sekine M."/>
            <person name="Oguchi A."/>
            <person name="Nagai Y."/>
            <person name="Sakai M."/>
            <person name="Aoki K."/>
            <person name="Ogura K."/>
            <person name="Kudoh Y."/>
            <person name="Kikuchi H."/>
            <person name="Zhang M.Q."/>
            <person name="Yanagida M."/>
        </authorList>
    </citation>
    <scope>NUCLEOTIDE SEQUENCE [LARGE SCALE GENOMIC DNA]</scope>
    <source>
        <strain>972 / ATCC 24843</strain>
    </source>
</reference>
<reference key="2">
    <citation type="journal article" date="2002" name="Nature">
        <title>The genome sequence of Schizosaccharomyces pombe.</title>
        <authorList>
            <person name="Wood V."/>
            <person name="Gwilliam R."/>
            <person name="Rajandream M.A."/>
            <person name="Lyne M.H."/>
            <person name="Lyne R."/>
            <person name="Stewart A."/>
            <person name="Sgouros J.G."/>
            <person name="Peat N."/>
            <person name="Hayles J."/>
            <person name="Baker S.G."/>
            <person name="Basham D."/>
            <person name="Bowman S."/>
            <person name="Brooks K."/>
            <person name="Brown D."/>
            <person name="Brown S."/>
            <person name="Chillingworth T."/>
            <person name="Churcher C.M."/>
            <person name="Collins M."/>
            <person name="Connor R."/>
            <person name="Cronin A."/>
            <person name="Davis P."/>
            <person name="Feltwell T."/>
            <person name="Fraser A."/>
            <person name="Gentles S."/>
            <person name="Goble A."/>
            <person name="Hamlin N."/>
            <person name="Harris D.E."/>
            <person name="Hidalgo J."/>
            <person name="Hodgson G."/>
            <person name="Holroyd S."/>
            <person name="Hornsby T."/>
            <person name="Howarth S."/>
            <person name="Huckle E.J."/>
            <person name="Hunt S."/>
            <person name="Jagels K."/>
            <person name="James K.D."/>
            <person name="Jones L."/>
            <person name="Jones M."/>
            <person name="Leather S."/>
            <person name="McDonald S."/>
            <person name="McLean J."/>
            <person name="Mooney P."/>
            <person name="Moule S."/>
            <person name="Mungall K.L."/>
            <person name="Murphy L.D."/>
            <person name="Niblett D."/>
            <person name="Odell C."/>
            <person name="Oliver K."/>
            <person name="O'Neil S."/>
            <person name="Pearson D."/>
            <person name="Quail M.A."/>
            <person name="Rabbinowitsch E."/>
            <person name="Rutherford K.M."/>
            <person name="Rutter S."/>
            <person name="Saunders D."/>
            <person name="Seeger K."/>
            <person name="Sharp S."/>
            <person name="Skelton J."/>
            <person name="Simmonds M.N."/>
            <person name="Squares R."/>
            <person name="Squares S."/>
            <person name="Stevens K."/>
            <person name="Taylor K."/>
            <person name="Taylor R.G."/>
            <person name="Tivey A."/>
            <person name="Walsh S.V."/>
            <person name="Warren T."/>
            <person name="Whitehead S."/>
            <person name="Woodward J.R."/>
            <person name="Volckaert G."/>
            <person name="Aert R."/>
            <person name="Robben J."/>
            <person name="Grymonprez B."/>
            <person name="Weltjens I."/>
            <person name="Vanstreels E."/>
            <person name="Rieger M."/>
            <person name="Schaefer M."/>
            <person name="Mueller-Auer S."/>
            <person name="Gabel C."/>
            <person name="Fuchs M."/>
            <person name="Duesterhoeft A."/>
            <person name="Fritzc C."/>
            <person name="Holzer E."/>
            <person name="Moestl D."/>
            <person name="Hilbert H."/>
            <person name="Borzym K."/>
            <person name="Langer I."/>
            <person name="Beck A."/>
            <person name="Lehrach H."/>
            <person name="Reinhardt R."/>
            <person name="Pohl T.M."/>
            <person name="Eger P."/>
            <person name="Zimmermann W."/>
            <person name="Wedler H."/>
            <person name="Wambutt R."/>
            <person name="Purnelle B."/>
            <person name="Goffeau A."/>
            <person name="Cadieu E."/>
            <person name="Dreano S."/>
            <person name="Gloux S."/>
            <person name="Lelaure V."/>
            <person name="Mottier S."/>
            <person name="Galibert F."/>
            <person name="Aves S.J."/>
            <person name="Xiang Z."/>
            <person name="Hunt C."/>
            <person name="Moore K."/>
            <person name="Hurst S.M."/>
            <person name="Lucas M."/>
            <person name="Rochet M."/>
            <person name="Gaillardin C."/>
            <person name="Tallada V.A."/>
            <person name="Garzon A."/>
            <person name="Thode G."/>
            <person name="Daga R.R."/>
            <person name="Cruzado L."/>
            <person name="Jimenez J."/>
            <person name="Sanchez M."/>
            <person name="del Rey F."/>
            <person name="Benito J."/>
            <person name="Dominguez A."/>
            <person name="Revuelta J.L."/>
            <person name="Moreno S."/>
            <person name="Armstrong J."/>
            <person name="Forsburg S.L."/>
            <person name="Cerutti L."/>
            <person name="Lowe T."/>
            <person name="McCombie W.R."/>
            <person name="Paulsen I."/>
            <person name="Potashkin J."/>
            <person name="Shpakovski G.V."/>
            <person name="Ussery D."/>
            <person name="Barrell B.G."/>
            <person name="Nurse P."/>
        </authorList>
    </citation>
    <scope>NUCLEOTIDE SEQUENCE [LARGE SCALE GENOMIC DNA]</scope>
    <source>
        <strain>972 / ATCC 24843</strain>
    </source>
</reference>
<reference key="3">
    <citation type="journal article" date="2006" name="Nat. Biotechnol.">
        <title>ORFeome cloning and global analysis of protein localization in the fission yeast Schizosaccharomyces pombe.</title>
        <authorList>
            <person name="Matsuyama A."/>
            <person name="Arai R."/>
            <person name="Yashiroda Y."/>
            <person name="Shirai A."/>
            <person name="Kamata A."/>
            <person name="Sekido S."/>
            <person name="Kobayashi Y."/>
            <person name="Hashimoto A."/>
            <person name="Hamamoto M."/>
            <person name="Hiraoka Y."/>
            <person name="Horinouchi S."/>
            <person name="Yoshida M."/>
        </authorList>
    </citation>
    <scope>SUBCELLULAR LOCATION [LARGE SCALE ANALYSIS]</scope>
</reference>
<accession>O42997</accession>
<accession>O13662</accession>
<comment type="subcellular location">
    <subcellularLocation>
        <location evidence="2">Mitochondrion membrane</location>
        <topology evidence="2">Single-pass membrane protein</topology>
    </subcellularLocation>
</comment>
<comment type="sequence caution" evidence="3">
    <conflict type="frameshift">
        <sequence resource="EMBL-CDS" id="BAA21453"/>
    </conflict>
</comment>
<sequence length="290" mass="33590">MFSLLRKAIDVNRSRITLHGIKVHSINTFRLIPYSLSLTKQIRFYASEGTDAGEMEKGLSVVNANHENRPFRDLEGYHFNTFTFLKTLMDKGYTEKEAEGLLEVTNMFVTDMLRHSHLNYLSEADFENCSYLFRTALSELRSEKINMRKDQISSLRSGLFSNQREVESLEQLVHEQLNKLNTESKMEFENRKNDTKNEVQQLSARIVELHNLLAVSLGKLRAENERQKWDQIRKAAGVVMAFTGFLVLVIPFGLGVRSRKKEKQDELDNLGSFNLDNKRDDYTDTNLSHM</sequence>
<keyword id="KW-0175">Coiled coil</keyword>
<keyword id="KW-0472">Membrane</keyword>
<keyword id="KW-0496">Mitochondrion</keyword>
<keyword id="KW-1185">Reference proteome</keyword>
<keyword id="KW-0812">Transmembrane</keyword>
<keyword id="KW-1133">Transmembrane helix</keyword>
<evidence type="ECO:0000255" key="1"/>
<evidence type="ECO:0000269" key="2">
    <source>
    </source>
</evidence>
<evidence type="ECO:0000305" key="3"/>
<organism>
    <name type="scientific">Schizosaccharomyces pombe (strain 972 / ATCC 24843)</name>
    <name type="common">Fission yeast</name>
    <dbReference type="NCBI Taxonomy" id="284812"/>
    <lineage>
        <taxon>Eukaryota</taxon>
        <taxon>Fungi</taxon>
        <taxon>Dikarya</taxon>
        <taxon>Ascomycota</taxon>
        <taxon>Taphrinomycotina</taxon>
        <taxon>Schizosaccharomycetes</taxon>
        <taxon>Schizosaccharomycetales</taxon>
        <taxon>Schizosaccharomycetaceae</taxon>
        <taxon>Schizosaccharomyces</taxon>
    </lineage>
</organism>
<protein>
    <recommendedName>
        <fullName>Uncharacterized protein C27B12.07</fullName>
    </recommendedName>
</protein>
<gene>
    <name type="ORF">pi071</name>
    <name type="ORF">SPBC27B12.07</name>
</gene>